<evidence type="ECO:0000250" key="1"/>
<evidence type="ECO:0000269" key="2">
    <source>
    </source>
</evidence>
<evidence type="ECO:0000269" key="3">
    <source>
    </source>
</evidence>
<evidence type="ECO:0000305" key="4"/>
<evidence type="ECO:0007744" key="5">
    <source>
    </source>
</evidence>
<proteinExistence type="evidence at protein level"/>
<name>IPPK_HUMAN</name>
<feature type="chain" id="PRO_0000110529" description="Inositol-pentakisphosphate 2-kinase">
    <location>
        <begin position="1"/>
        <end position="491"/>
    </location>
</feature>
<feature type="short sequence motif" description="EXKPK motif">
    <location>
        <begin position="136"/>
        <end position="140"/>
    </location>
</feature>
<feature type="modified residue" description="Phosphoserine" evidence="5">
    <location>
        <position position="282"/>
    </location>
</feature>
<feature type="sequence variant" id="VAR_049641" description="In dbSNP:rs2277168.">
    <original>R</original>
    <variation>W</variation>
    <location>
        <position position="277"/>
    </location>
</feature>
<feature type="sequence variant" id="VAR_049642" description="In dbSNP:rs2277170.">
    <original>L</original>
    <variation>F</variation>
    <location>
        <position position="376"/>
    </location>
</feature>
<feature type="sequence conflict" description="In Ref. 3; BAB14866." evidence="4" ref="3">
    <original>V</original>
    <variation>A</variation>
    <location>
        <position position="264"/>
    </location>
</feature>
<sequence length="491" mass="56017">MEEGKMDENEWGYHGEGNKSLVVAHAQRCVVLRFLKFPPNRKKTSEEIFQHLQNIVDFGKNVMKEFLGENYVHYGEVVQLPLEFVKQLCLKIQSERPESRCDKDLDTLSGYAMCLPNLTRLQTYRFAEHRPILCVEIKPKCGFIPFSSDVTHEMKHKVCRYCMHQHLKVATGKWKQISKYCPLDLYSGNKQRMHFALKSLLQEAQNNLKIFKNGELIYGCKDARSPVADWSELAHHLKPFFFPSNGLASGPHCTRAVIRELVHVITRVLLSGSDKGRAGTLSPGLGPQGPRVCEASPFSRSLRCQGKNTPERSGLPKGCLLYKTLQVQMLDLLDIEGLYPLYNRVERYLEEFPEERKTLQIDGPYDEAFYQKLLDLSTEDDGTVAFALTKVQQYRVAMTAKDCSIMIALSPCLQDASSDQRPVVPSSRSRFAFSVSVLDLDLKPYESIPHQYKLDGKIVNYYSKTVRAKDNAVMSTRFKESEDCTLVLHKV</sequence>
<protein>
    <recommendedName>
        <fullName>Inositol-pentakisphosphate 2-kinase</fullName>
        <ecNumber>2.7.1.158</ecNumber>
    </recommendedName>
    <alternativeName>
        <fullName>IPK1 homolog</fullName>
    </alternativeName>
    <alternativeName>
        <fullName>Inositol-1,3,4,5,6-pentakisphosphate 2-kinase</fullName>
    </alternativeName>
    <alternativeName>
        <fullName>Ins(1,3,4,5,6)P5 2-kinase</fullName>
        <shortName>InsP5 2-kinase</shortName>
    </alternativeName>
</protein>
<gene>
    <name type="primary">IPPK</name>
    <name type="synonym">C9orf12</name>
</gene>
<accession>Q9H8X2</accession>
<accession>Q5T9F7</accession>
<accession>Q9H7V8</accession>
<organism>
    <name type="scientific">Homo sapiens</name>
    <name type="common">Human</name>
    <dbReference type="NCBI Taxonomy" id="9606"/>
    <lineage>
        <taxon>Eukaryota</taxon>
        <taxon>Metazoa</taxon>
        <taxon>Chordata</taxon>
        <taxon>Craniata</taxon>
        <taxon>Vertebrata</taxon>
        <taxon>Euteleostomi</taxon>
        <taxon>Mammalia</taxon>
        <taxon>Eutheria</taxon>
        <taxon>Euarchontoglires</taxon>
        <taxon>Primates</taxon>
        <taxon>Haplorrhini</taxon>
        <taxon>Catarrhini</taxon>
        <taxon>Hominidae</taxon>
        <taxon>Homo</taxon>
    </lineage>
</organism>
<comment type="function">
    <text evidence="2 3">Phosphorylates Ins(1,3,4,5,6)P5 at position 2 to form Ins(1,2,3,4,5,6)P6 (InsP6 or phytate). InsP6 is involved in many processes such as mRNA export, non-homologous end-joining, endocytosis, ion channel regulation. It also protects cells from TNF-alpha-induced apoptosis.</text>
</comment>
<comment type="catalytic activity">
    <reaction evidence="2">
        <text>1D-myo-inositol 1,3,4,5,6-pentakisphosphate + ATP = 1D-myo-inositol hexakisphosphate + ADP + H(+)</text>
        <dbReference type="Rhea" id="RHEA:20313"/>
        <dbReference type="ChEBI" id="CHEBI:15378"/>
        <dbReference type="ChEBI" id="CHEBI:30616"/>
        <dbReference type="ChEBI" id="CHEBI:57733"/>
        <dbReference type="ChEBI" id="CHEBI:58130"/>
        <dbReference type="ChEBI" id="CHEBI:456216"/>
        <dbReference type="EC" id="2.7.1.158"/>
    </reaction>
</comment>
<comment type="biophysicochemical properties">
    <kinetics>
        <KM evidence="2">0.43 uM for Ins(1,3,4,5,6)P5</KM>
        <KM evidence="2">21 uM for ATP</KM>
        <Vmax evidence="2">31.0 nmol/min/mg enzyme</Vmax>
    </kinetics>
</comment>
<comment type="subcellular location">
    <subcellularLocation>
        <location evidence="1">Cytoplasm</location>
    </subcellularLocation>
    <subcellularLocation>
        <location evidence="1">Nucleus</location>
    </subcellularLocation>
</comment>
<comment type="tissue specificity">
    <text evidence="2">Ubiquitously expressed, with high expression in heart, brain, testis and placenta.</text>
</comment>
<comment type="domain">
    <text>The EXKPK motif is conserved in inositol-pentakisphosphate 2-kinases of both family 1 and 2.</text>
</comment>
<comment type="similarity">
    <text evidence="4">Belongs to the IPK1 type 2 family.</text>
</comment>
<comment type="sequence caution" evidence="4">
    <conflict type="erroneous initiation">
        <sequence resource="EMBL-CDS" id="BAB14866"/>
    </conflict>
</comment>
<keyword id="KW-0067">ATP-binding</keyword>
<keyword id="KW-0963">Cytoplasm</keyword>
<keyword id="KW-0418">Kinase</keyword>
<keyword id="KW-0547">Nucleotide-binding</keyword>
<keyword id="KW-0539">Nucleus</keyword>
<keyword id="KW-0597">Phosphoprotein</keyword>
<keyword id="KW-1267">Proteomics identification</keyword>
<keyword id="KW-1185">Reference proteome</keyword>
<keyword id="KW-0808">Transferase</keyword>
<reference key="1">
    <citation type="journal article" date="2002" name="J. Biol. Chem.">
        <title>The synthesis of inositol hexakisphosphate. Characterization of human inositol 1,3,4,5,6-pentakisphosphate 2-kinase.</title>
        <authorList>
            <person name="Verbsky J.W."/>
            <person name="Wilson M.P."/>
            <person name="Kisseleva M.V."/>
            <person name="Majerus P.W."/>
            <person name="Wente S.R."/>
        </authorList>
    </citation>
    <scope>NUCLEOTIDE SEQUENCE [MRNA]</scope>
    <scope>FUNCTION</scope>
    <scope>ENZYME ACTIVITY</scope>
    <scope>BIOPHYSICOCHEMICAL PROPERTIES</scope>
    <scope>TISSUE SPECIFICITY</scope>
</reference>
<reference key="2">
    <citation type="submission" date="2001-02" db="EMBL/GenBank/DDBJ databases">
        <title>Characterization of a novel gene, C9orf12, and exclusion as the gene causing hereditary sensory neuropathy type I by mutation analysis.</title>
        <authorList>
            <person name="Hulme D.J."/>
            <person name="Dawkins J.L."/>
            <person name="Nicholson G.A."/>
        </authorList>
    </citation>
    <scope>NUCLEOTIDE SEQUENCE [MRNA]</scope>
    <source>
        <tissue>Spinal cord</tissue>
    </source>
</reference>
<reference key="3">
    <citation type="journal article" date="2004" name="Nat. Genet.">
        <title>Complete sequencing and characterization of 21,243 full-length human cDNAs.</title>
        <authorList>
            <person name="Ota T."/>
            <person name="Suzuki Y."/>
            <person name="Nishikawa T."/>
            <person name="Otsuki T."/>
            <person name="Sugiyama T."/>
            <person name="Irie R."/>
            <person name="Wakamatsu A."/>
            <person name="Hayashi K."/>
            <person name="Sato H."/>
            <person name="Nagai K."/>
            <person name="Kimura K."/>
            <person name="Makita H."/>
            <person name="Sekine M."/>
            <person name="Obayashi M."/>
            <person name="Nishi T."/>
            <person name="Shibahara T."/>
            <person name="Tanaka T."/>
            <person name="Ishii S."/>
            <person name="Yamamoto J."/>
            <person name="Saito K."/>
            <person name="Kawai Y."/>
            <person name="Isono Y."/>
            <person name="Nakamura Y."/>
            <person name="Nagahari K."/>
            <person name="Murakami K."/>
            <person name="Yasuda T."/>
            <person name="Iwayanagi T."/>
            <person name="Wagatsuma M."/>
            <person name="Shiratori A."/>
            <person name="Sudo H."/>
            <person name="Hosoiri T."/>
            <person name="Kaku Y."/>
            <person name="Kodaira H."/>
            <person name="Kondo H."/>
            <person name="Sugawara M."/>
            <person name="Takahashi M."/>
            <person name="Kanda K."/>
            <person name="Yokoi T."/>
            <person name="Furuya T."/>
            <person name="Kikkawa E."/>
            <person name="Omura Y."/>
            <person name="Abe K."/>
            <person name="Kamihara K."/>
            <person name="Katsuta N."/>
            <person name="Sato K."/>
            <person name="Tanikawa M."/>
            <person name="Yamazaki M."/>
            <person name="Ninomiya K."/>
            <person name="Ishibashi T."/>
            <person name="Yamashita H."/>
            <person name="Murakawa K."/>
            <person name="Fujimori K."/>
            <person name="Tanai H."/>
            <person name="Kimata M."/>
            <person name="Watanabe M."/>
            <person name="Hiraoka S."/>
            <person name="Chiba Y."/>
            <person name="Ishida S."/>
            <person name="Ono Y."/>
            <person name="Takiguchi S."/>
            <person name="Watanabe S."/>
            <person name="Yosida M."/>
            <person name="Hotuta T."/>
            <person name="Kusano J."/>
            <person name="Kanehori K."/>
            <person name="Takahashi-Fujii A."/>
            <person name="Hara H."/>
            <person name="Tanase T.-O."/>
            <person name="Nomura Y."/>
            <person name="Togiya S."/>
            <person name="Komai F."/>
            <person name="Hara R."/>
            <person name="Takeuchi K."/>
            <person name="Arita M."/>
            <person name="Imose N."/>
            <person name="Musashino K."/>
            <person name="Yuuki H."/>
            <person name="Oshima A."/>
            <person name="Sasaki N."/>
            <person name="Aotsuka S."/>
            <person name="Yoshikawa Y."/>
            <person name="Matsunawa H."/>
            <person name="Ichihara T."/>
            <person name="Shiohata N."/>
            <person name="Sano S."/>
            <person name="Moriya S."/>
            <person name="Momiyama H."/>
            <person name="Satoh N."/>
            <person name="Takami S."/>
            <person name="Terashima Y."/>
            <person name="Suzuki O."/>
            <person name="Nakagawa S."/>
            <person name="Senoh A."/>
            <person name="Mizoguchi H."/>
            <person name="Goto Y."/>
            <person name="Shimizu F."/>
            <person name="Wakebe H."/>
            <person name="Hishigaki H."/>
            <person name="Watanabe T."/>
            <person name="Sugiyama A."/>
            <person name="Takemoto M."/>
            <person name="Kawakami B."/>
            <person name="Yamazaki M."/>
            <person name="Watanabe K."/>
            <person name="Kumagai A."/>
            <person name="Itakura S."/>
            <person name="Fukuzumi Y."/>
            <person name="Fujimori Y."/>
            <person name="Komiyama M."/>
            <person name="Tashiro H."/>
            <person name="Tanigami A."/>
            <person name="Fujiwara T."/>
            <person name="Ono T."/>
            <person name="Yamada K."/>
            <person name="Fujii Y."/>
            <person name="Ozaki K."/>
            <person name="Hirao M."/>
            <person name="Ohmori Y."/>
            <person name="Kawabata A."/>
            <person name="Hikiji T."/>
            <person name="Kobatake N."/>
            <person name="Inagaki H."/>
            <person name="Ikema Y."/>
            <person name="Okamoto S."/>
            <person name="Okitani R."/>
            <person name="Kawakami T."/>
            <person name="Noguchi S."/>
            <person name="Itoh T."/>
            <person name="Shigeta K."/>
            <person name="Senba T."/>
            <person name="Matsumura K."/>
            <person name="Nakajima Y."/>
            <person name="Mizuno T."/>
            <person name="Morinaga M."/>
            <person name="Sasaki M."/>
            <person name="Togashi T."/>
            <person name="Oyama M."/>
            <person name="Hata H."/>
            <person name="Watanabe M."/>
            <person name="Komatsu T."/>
            <person name="Mizushima-Sugano J."/>
            <person name="Satoh T."/>
            <person name="Shirai Y."/>
            <person name="Takahashi Y."/>
            <person name="Nakagawa K."/>
            <person name="Okumura K."/>
            <person name="Nagase T."/>
            <person name="Nomura N."/>
            <person name="Kikuchi H."/>
            <person name="Masuho Y."/>
            <person name="Yamashita R."/>
            <person name="Nakai K."/>
            <person name="Yada T."/>
            <person name="Nakamura Y."/>
            <person name="Ohara O."/>
            <person name="Isogai T."/>
            <person name="Sugano S."/>
        </authorList>
    </citation>
    <scope>NUCLEOTIDE SEQUENCE [LARGE SCALE MRNA]</scope>
    <source>
        <tissue>Teratocarcinoma</tissue>
    </source>
</reference>
<reference key="4">
    <citation type="journal article" date="2004" name="Nature">
        <title>DNA sequence and analysis of human chromosome 9.</title>
        <authorList>
            <person name="Humphray S.J."/>
            <person name="Oliver K."/>
            <person name="Hunt A.R."/>
            <person name="Plumb R.W."/>
            <person name="Loveland J.E."/>
            <person name="Howe K.L."/>
            <person name="Andrews T.D."/>
            <person name="Searle S."/>
            <person name="Hunt S.E."/>
            <person name="Scott C.E."/>
            <person name="Jones M.C."/>
            <person name="Ainscough R."/>
            <person name="Almeida J.P."/>
            <person name="Ambrose K.D."/>
            <person name="Ashwell R.I.S."/>
            <person name="Babbage A.K."/>
            <person name="Babbage S."/>
            <person name="Bagguley C.L."/>
            <person name="Bailey J."/>
            <person name="Banerjee R."/>
            <person name="Barker D.J."/>
            <person name="Barlow K.F."/>
            <person name="Bates K."/>
            <person name="Beasley H."/>
            <person name="Beasley O."/>
            <person name="Bird C.P."/>
            <person name="Bray-Allen S."/>
            <person name="Brown A.J."/>
            <person name="Brown J.Y."/>
            <person name="Burford D."/>
            <person name="Burrill W."/>
            <person name="Burton J."/>
            <person name="Carder C."/>
            <person name="Carter N.P."/>
            <person name="Chapman J.C."/>
            <person name="Chen Y."/>
            <person name="Clarke G."/>
            <person name="Clark S.Y."/>
            <person name="Clee C.M."/>
            <person name="Clegg S."/>
            <person name="Collier R.E."/>
            <person name="Corby N."/>
            <person name="Crosier M."/>
            <person name="Cummings A.T."/>
            <person name="Davies J."/>
            <person name="Dhami P."/>
            <person name="Dunn M."/>
            <person name="Dutta I."/>
            <person name="Dyer L.W."/>
            <person name="Earthrowl M.E."/>
            <person name="Faulkner L."/>
            <person name="Fleming C.J."/>
            <person name="Frankish A."/>
            <person name="Frankland J.A."/>
            <person name="French L."/>
            <person name="Fricker D.G."/>
            <person name="Garner P."/>
            <person name="Garnett J."/>
            <person name="Ghori J."/>
            <person name="Gilbert J.G.R."/>
            <person name="Glison C."/>
            <person name="Grafham D.V."/>
            <person name="Gribble S."/>
            <person name="Griffiths C."/>
            <person name="Griffiths-Jones S."/>
            <person name="Grocock R."/>
            <person name="Guy J."/>
            <person name="Hall R.E."/>
            <person name="Hammond S."/>
            <person name="Harley J.L."/>
            <person name="Harrison E.S.I."/>
            <person name="Hart E.A."/>
            <person name="Heath P.D."/>
            <person name="Henderson C.D."/>
            <person name="Hopkins B.L."/>
            <person name="Howard P.J."/>
            <person name="Howden P.J."/>
            <person name="Huckle E."/>
            <person name="Johnson C."/>
            <person name="Johnson D."/>
            <person name="Joy A.A."/>
            <person name="Kay M."/>
            <person name="Keenan S."/>
            <person name="Kershaw J.K."/>
            <person name="Kimberley A.M."/>
            <person name="King A."/>
            <person name="Knights A."/>
            <person name="Laird G.K."/>
            <person name="Langford C."/>
            <person name="Lawlor S."/>
            <person name="Leongamornlert D.A."/>
            <person name="Leversha M."/>
            <person name="Lloyd C."/>
            <person name="Lloyd D.M."/>
            <person name="Lovell J."/>
            <person name="Martin S."/>
            <person name="Mashreghi-Mohammadi M."/>
            <person name="Matthews L."/>
            <person name="McLaren S."/>
            <person name="McLay K.E."/>
            <person name="McMurray A."/>
            <person name="Milne S."/>
            <person name="Nickerson T."/>
            <person name="Nisbett J."/>
            <person name="Nordsiek G."/>
            <person name="Pearce A.V."/>
            <person name="Peck A.I."/>
            <person name="Porter K.M."/>
            <person name="Pandian R."/>
            <person name="Pelan S."/>
            <person name="Phillimore B."/>
            <person name="Povey S."/>
            <person name="Ramsey Y."/>
            <person name="Rand V."/>
            <person name="Scharfe M."/>
            <person name="Sehra H.K."/>
            <person name="Shownkeen R."/>
            <person name="Sims S.K."/>
            <person name="Skuce C.D."/>
            <person name="Smith M."/>
            <person name="Steward C.A."/>
            <person name="Swarbreck D."/>
            <person name="Sycamore N."/>
            <person name="Tester J."/>
            <person name="Thorpe A."/>
            <person name="Tracey A."/>
            <person name="Tromans A."/>
            <person name="Thomas D.W."/>
            <person name="Wall M."/>
            <person name="Wallis J.M."/>
            <person name="West A.P."/>
            <person name="Whitehead S.L."/>
            <person name="Willey D.L."/>
            <person name="Williams S.A."/>
            <person name="Wilming L."/>
            <person name="Wray P.W."/>
            <person name="Young L."/>
            <person name="Ashurst J.L."/>
            <person name="Coulson A."/>
            <person name="Blocker H."/>
            <person name="Durbin R.M."/>
            <person name="Sulston J.E."/>
            <person name="Hubbard T."/>
            <person name="Jackson M.J."/>
            <person name="Bentley D.R."/>
            <person name="Beck S."/>
            <person name="Rogers J."/>
            <person name="Dunham I."/>
        </authorList>
    </citation>
    <scope>NUCLEOTIDE SEQUENCE [LARGE SCALE GENOMIC DNA]</scope>
</reference>
<reference key="5">
    <citation type="journal article" date="2004" name="Genome Res.">
        <title>The status, quality, and expansion of the NIH full-length cDNA project: the Mammalian Gene Collection (MGC).</title>
        <authorList>
            <consortium name="The MGC Project Team"/>
        </authorList>
    </citation>
    <scope>NUCLEOTIDE SEQUENCE [LARGE SCALE MRNA]</scope>
    <source>
        <tissue>Testis</tissue>
    </source>
</reference>
<reference key="6">
    <citation type="journal article" date="2005" name="J. Biol. Chem.">
        <title>Increased levels of inositol hexakisphosphate (InsP6) protect HEK293 cells from tumor necrosis factor (alpha)- and Fas-induced apoptosis.</title>
        <authorList>
            <person name="Verbsky J."/>
            <person name="Majerus P.W."/>
        </authorList>
    </citation>
    <scope>FUNCTION</scope>
</reference>
<reference key="7">
    <citation type="journal article" date="2013" name="J. Proteome Res.">
        <title>Toward a comprehensive characterization of a human cancer cell phosphoproteome.</title>
        <authorList>
            <person name="Zhou H."/>
            <person name="Di Palma S."/>
            <person name="Preisinger C."/>
            <person name="Peng M."/>
            <person name="Polat A.N."/>
            <person name="Heck A.J."/>
            <person name="Mohammed S."/>
        </authorList>
    </citation>
    <scope>PHOSPHORYLATION [LARGE SCALE ANALYSIS] AT SER-282</scope>
    <scope>IDENTIFICATION BY MASS SPECTROMETRY [LARGE SCALE ANALYSIS]</scope>
    <source>
        <tissue>Erythroleukemia</tissue>
    </source>
</reference>
<dbReference type="EC" id="2.7.1.158"/>
<dbReference type="EMBL" id="AF520811">
    <property type="protein sequence ID" value="AAM75353.1"/>
    <property type="molecule type" value="mRNA"/>
</dbReference>
<dbReference type="EMBL" id="AF351202">
    <property type="protein sequence ID" value="AAK69692.1"/>
    <property type="molecule type" value="mRNA"/>
</dbReference>
<dbReference type="EMBL" id="AK023225">
    <property type="protein sequence ID" value="BAB14476.1"/>
    <property type="molecule type" value="mRNA"/>
</dbReference>
<dbReference type="EMBL" id="AK024267">
    <property type="protein sequence ID" value="BAB14866.1"/>
    <property type="status" value="ALT_INIT"/>
    <property type="molecule type" value="mRNA"/>
</dbReference>
<dbReference type="EMBL" id="AL137074">
    <property type="status" value="NOT_ANNOTATED_CDS"/>
    <property type="molecule type" value="Genomic_DNA"/>
</dbReference>
<dbReference type="EMBL" id="AL157827">
    <property type="status" value="NOT_ANNOTATED_CDS"/>
    <property type="molecule type" value="Genomic_DNA"/>
</dbReference>
<dbReference type="EMBL" id="BC026154">
    <property type="protein sequence ID" value="AAH26154.1"/>
    <property type="molecule type" value="mRNA"/>
</dbReference>
<dbReference type="CCDS" id="CCDS6699.1"/>
<dbReference type="RefSeq" id="NP_073592.1">
    <property type="nucleotide sequence ID" value="NM_022755.6"/>
</dbReference>
<dbReference type="SMR" id="Q9H8X2"/>
<dbReference type="BioGRID" id="122279">
    <property type="interactions" value="111"/>
</dbReference>
<dbReference type="FunCoup" id="Q9H8X2">
    <property type="interactions" value="3661"/>
</dbReference>
<dbReference type="IntAct" id="Q9H8X2">
    <property type="interactions" value="106"/>
</dbReference>
<dbReference type="STRING" id="9606.ENSP00000287996"/>
<dbReference type="MoonProt" id="Q9H8X2"/>
<dbReference type="iPTMnet" id="Q9H8X2"/>
<dbReference type="PhosphoSitePlus" id="Q9H8X2"/>
<dbReference type="SwissPalm" id="Q9H8X2"/>
<dbReference type="BioMuta" id="IPPK"/>
<dbReference type="DMDM" id="74752731"/>
<dbReference type="jPOST" id="Q9H8X2"/>
<dbReference type="MassIVE" id="Q9H8X2"/>
<dbReference type="PaxDb" id="9606-ENSP00000287996"/>
<dbReference type="PeptideAtlas" id="Q9H8X2"/>
<dbReference type="ProteomicsDB" id="81252"/>
<dbReference type="Pumba" id="Q9H8X2"/>
<dbReference type="Antibodypedia" id="13762">
    <property type="antibodies" value="111 antibodies from 25 providers"/>
</dbReference>
<dbReference type="DNASU" id="64768"/>
<dbReference type="Ensembl" id="ENST00000287996.8">
    <property type="protein sequence ID" value="ENSP00000287996.3"/>
    <property type="gene ID" value="ENSG00000127080.10"/>
</dbReference>
<dbReference type="GeneID" id="64768"/>
<dbReference type="KEGG" id="hsa:64768"/>
<dbReference type="MANE-Select" id="ENST00000287996.8">
    <property type="protein sequence ID" value="ENSP00000287996.3"/>
    <property type="RefSeq nucleotide sequence ID" value="NM_022755.6"/>
    <property type="RefSeq protein sequence ID" value="NP_073592.1"/>
</dbReference>
<dbReference type="UCSC" id="uc004asl.1">
    <property type="organism name" value="human"/>
</dbReference>
<dbReference type="AGR" id="HGNC:14645"/>
<dbReference type="CTD" id="64768"/>
<dbReference type="DisGeNET" id="64768"/>
<dbReference type="GeneCards" id="IPPK"/>
<dbReference type="HGNC" id="HGNC:14645">
    <property type="gene designation" value="IPPK"/>
</dbReference>
<dbReference type="HPA" id="ENSG00000127080">
    <property type="expression patterns" value="Low tissue specificity"/>
</dbReference>
<dbReference type="MalaCards" id="IPPK"/>
<dbReference type="MIM" id="619043">
    <property type="type" value="gene"/>
</dbReference>
<dbReference type="neXtProt" id="NX_Q9H8X2"/>
<dbReference type="OpenTargets" id="ENSG00000127080"/>
<dbReference type="PharmGKB" id="PA25970"/>
<dbReference type="VEuPathDB" id="HostDB:ENSG00000127080"/>
<dbReference type="eggNOG" id="KOG4749">
    <property type="taxonomic scope" value="Eukaryota"/>
</dbReference>
<dbReference type="GeneTree" id="ENSGT00390000010053"/>
<dbReference type="HOGENOM" id="CLU_033188_1_0_1"/>
<dbReference type="InParanoid" id="Q9H8X2"/>
<dbReference type="OMA" id="HRQHCIV"/>
<dbReference type="OrthoDB" id="272370at2759"/>
<dbReference type="PAN-GO" id="Q9H8X2">
    <property type="GO annotations" value="4 GO annotations based on evolutionary models"/>
</dbReference>
<dbReference type="PhylomeDB" id="Q9H8X2"/>
<dbReference type="TreeFam" id="TF106142"/>
<dbReference type="BioCyc" id="MetaCyc:HS05071-MONOMER"/>
<dbReference type="BRENDA" id="2.7.1.158">
    <property type="organism ID" value="2681"/>
</dbReference>
<dbReference type="PathwayCommons" id="Q9H8X2"/>
<dbReference type="Reactome" id="R-HSA-1855167">
    <property type="pathway name" value="Synthesis of pyrophosphates in the cytosol"/>
</dbReference>
<dbReference type="Reactome" id="R-HSA-1855191">
    <property type="pathway name" value="Synthesis of IPs in the nucleus"/>
</dbReference>
<dbReference type="SABIO-RK" id="Q9H8X2"/>
<dbReference type="SignaLink" id="Q9H8X2"/>
<dbReference type="BioGRID-ORCS" id="64768">
    <property type="hits" value="176 hits in 1165 CRISPR screens"/>
</dbReference>
<dbReference type="CD-CODE" id="8C2F96ED">
    <property type="entry name" value="Centrosome"/>
</dbReference>
<dbReference type="ChiTaRS" id="IPPK">
    <property type="organism name" value="human"/>
</dbReference>
<dbReference type="GenomeRNAi" id="64768"/>
<dbReference type="Pharos" id="Q9H8X2">
    <property type="development level" value="Tbio"/>
</dbReference>
<dbReference type="PRO" id="PR:Q9H8X2"/>
<dbReference type="Proteomes" id="UP000005640">
    <property type="component" value="Chromosome 9"/>
</dbReference>
<dbReference type="RNAct" id="Q9H8X2">
    <property type="molecule type" value="protein"/>
</dbReference>
<dbReference type="Bgee" id="ENSG00000127080">
    <property type="expression patterns" value="Expressed in lower esophagus mucosa and 171 other cell types or tissues"/>
</dbReference>
<dbReference type="ExpressionAtlas" id="Q9H8X2">
    <property type="expression patterns" value="baseline and differential"/>
</dbReference>
<dbReference type="GO" id="GO:0005829">
    <property type="term" value="C:cytosol"/>
    <property type="evidence" value="ECO:0000304"/>
    <property type="project" value="Reactome"/>
</dbReference>
<dbReference type="GO" id="GO:0005730">
    <property type="term" value="C:nucleolus"/>
    <property type="evidence" value="ECO:0000315"/>
    <property type="project" value="CAFA"/>
</dbReference>
<dbReference type="GO" id="GO:0005654">
    <property type="term" value="C:nucleoplasm"/>
    <property type="evidence" value="ECO:0000304"/>
    <property type="project" value="Reactome"/>
</dbReference>
<dbReference type="GO" id="GO:0005634">
    <property type="term" value="C:nucleus"/>
    <property type="evidence" value="ECO:0000318"/>
    <property type="project" value="GO_Central"/>
</dbReference>
<dbReference type="GO" id="GO:0005524">
    <property type="term" value="F:ATP binding"/>
    <property type="evidence" value="ECO:0007669"/>
    <property type="project" value="UniProtKB-KW"/>
</dbReference>
<dbReference type="GO" id="GO:0035299">
    <property type="term" value="F:inositol-1,3,4,5,6-pentakisphosphate 2-kinase activity"/>
    <property type="evidence" value="ECO:0000314"/>
    <property type="project" value="HGNC-UCL"/>
</dbReference>
<dbReference type="GO" id="GO:0060090">
    <property type="term" value="F:molecular adaptor activity"/>
    <property type="evidence" value="ECO:0000315"/>
    <property type="project" value="CAFA"/>
</dbReference>
<dbReference type="GO" id="GO:0032958">
    <property type="term" value="P:inositol phosphate biosynthetic process"/>
    <property type="evidence" value="ECO:0000318"/>
    <property type="project" value="GO_Central"/>
</dbReference>
<dbReference type="GO" id="GO:0043647">
    <property type="term" value="P:inositol phosphate metabolic process"/>
    <property type="evidence" value="ECO:0000304"/>
    <property type="project" value="Reactome"/>
</dbReference>
<dbReference type="GO" id="GO:1901838">
    <property type="term" value="P:positive regulation of transcription of nucleolar large rRNA by RNA polymerase I"/>
    <property type="evidence" value="ECO:0000315"/>
    <property type="project" value="CAFA"/>
</dbReference>
<dbReference type="FunFam" id="3.30.200.110:FF:000001">
    <property type="entry name" value="Inositol-pentakisphosphate 2-kinase"/>
    <property type="match status" value="1"/>
</dbReference>
<dbReference type="Gene3D" id="3.30.200.110">
    <property type="entry name" value="Inositol-pentakisphosphate 2-kinase, N-lobe"/>
    <property type="match status" value="1"/>
</dbReference>
<dbReference type="InterPro" id="IPR009286">
    <property type="entry name" value="Ins_P5_2-kin"/>
</dbReference>
<dbReference type="InterPro" id="IPR043001">
    <property type="entry name" value="IP5_2-K_N_lobe"/>
</dbReference>
<dbReference type="PANTHER" id="PTHR14456">
    <property type="entry name" value="INOSITOL POLYPHOSPHATE KINASE 1"/>
    <property type="match status" value="1"/>
</dbReference>
<dbReference type="PANTHER" id="PTHR14456:SF2">
    <property type="entry name" value="INOSITOL-PENTAKISPHOSPHATE 2-KINASE"/>
    <property type="match status" value="1"/>
</dbReference>
<dbReference type="Pfam" id="PF06090">
    <property type="entry name" value="Ins_P5_2-kin"/>
    <property type="match status" value="1"/>
</dbReference>